<sequence length="682" mass="77071">MLMRLLPLPSLTDGRPLGCCCTCQGSMKGDELKAQGPLPPQPLQGPLKGDKCEQPGLGPEPTAPQQHTEEEEALIEFHRSYRELFQFFCNNTTIHGAIRLVCSKHNRMKTAFWAVLWLCTFGMMYWQFALLFGEYFSYPVSLNINLNSDKLVFPAVTVCTLNPYRYKEIKEQLRELDRITQQTLFDLYNYNASSTLLAGARSRRSLADTLPYPLQRIPVQPEPRRARSSDPSSVRDNNPRVDRRDWRVGFQLCNQNKSDCFYQTSSSGVDGVREWYRFHYINILAQVADTSPRWEEETLGNFIFACRFNQAPCTQENYSHFHHPIYGNCYTFNNKNDSSLWMASMPGINNGLSLTLRTEQNDYIPLLSTVTGARVTVHGQDEPAFMDDGGFNLRPGVETSISMRKEALDRLGGSYGDCTQDGSDVPVQNLYPSKYTQQVCIHSCFQENMIKQCGCAYIFYPKPKGVEFCDYTNHSAWGYCYYKLQGAFSSDSLGCFNKCRKPCNVTIYKLSAGYSRWPSAASQDWIFQMLSLQNNYTISNKRNGVAKLNIYFKELNYRTNSESPSVTMVTLLSNLGSQWSLWFGSSVLSVVEMAEFMFDLLVITLLMLLRRFRSRYWSPGRGARAAREVACTPPPSLPSRFCAHSAFPTLTAPPPAYATLSACPPLQGLAGASSAACAPREP</sequence>
<proteinExistence type="evidence at transcript level"/>
<dbReference type="EMBL" id="AF071230">
    <property type="protein sequence ID" value="AAD50545.1"/>
    <property type="molecule type" value="mRNA"/>
</dbReference>
<dbReference type="EMBL" id="AJ249296">
    <property type="protein sequence ID" value="CAB64910.1"/>
    <property type="molecule type" value="mRNA"/>
</dbReference>
<dbReference type="SMR" id="Q9R1N2"/>
<dbReference type="FunCoup" id="Q9R1N2">
    <property type="interactions" value="109"/>
</dbReference>
<dbReference type="STRING" id="10141.ENSCPOP00000016986"/>
<dbReference type="GlyCosmos" id="Q9R1N2">
    <property type="glycosylation" value="2 sites, No reported glycans"/>
</dbReference>
<dbReference type="eggNOG" id="KOG4294">
    <property type="taxonomic scope" value="Eukaryota"/>
</dbReference>
<dbReference type="InParanoid" id="Q9R1N2"/>
<dbReference type="Proteomes" id="UP000005447">
    <property type="component" value="Unassembled WGS sequence"/>
</dbReference>
<dbReference type="GO" id="GO:0001669">
    <property type="term" value="C:acrosomal vesicle"/>
    <property type="evidence" value="ECO:0000250"/>
    <property type="project" value="UniProtKB"/>
</dbReference>
<dbReference type="GO" id="GO:0016324">
    <property type="term" value="C:apical plasma membrane"/>
    <property type="evidence" value="ECO:0000250"/>
    <property type="project" value="UniProtKB"/>
</dbReference>
<dbReference type="GO" id="GO:0060170">
    <property type="term" value="C:ciliary membrane"/>
    <property type="evidence" value="ECO:0000250"/>
    <property type="project" value="UniProtKB"/>
</dbReference>
<dbReference type="GO" id="GO:0005737">
    <property type="term" value="C:cytoplasm"/>
    <property type="evidence" value="ECO:0000250"/>
    <property type="project" value="UniProtKB"/>
</dbReference>
<dbReference type="GO" id="GO:0031514">
    <property type="term" value="C:motile cilium"/>
    <property type="evidence" value="ECO:0000250"/>
    <property type="project" value="UniProtKB"/>
</dbReference>
<dbReference type="GO" id="GO:0005886">
    <property type="term" value="C:plasma membrane"/>
    <property type="evidence" value="ECO:0000250"/>
    <property type="project" value="UniProtKB"/>
</dbReference>
<dbReference type="GO" id="GO:0034706">
    <property type="term" value="C:sodium channel complex"/>
    <property type="evidence" value="ECO:0000250"/>
    <property type="project" value="UniProtKB"/>
</dbReference>
<dbReference type="GO" id="GO:0097228">
    <property type="term" value="C:sperm principal piece"/>
    <property type="evidence" value="ECO:0000250"/>
    <property type="project" value="UniProtKB"/>
</dbReference>
<dbReference type="GO" id="GO:0015280">
    <property type="term" value="F:ligand-gated sodium channel activity"/>
    <property type="evidence" value="ECO:0007669"/>
    <property type="project" value="InterPro"/>
</dbReference>
<dbReference type="GO" id="GO:0050891">
    <property type="term" value="P:multicellular organismal-level water homeostasis"/>
    <property type="evidence" value="ECO:0000250"/>
    <property type="project" value="UniProtKB"/>
</dbReference>
<dbReference type="GO" id="GO:0055078">
    <property type="term" value="P:sodium ion homeostasis"/>
    <property type="evidence" value="ECO:0000250"/>
    <property type="project" value="UniProtKB"/>
</dbReference>
<dbReference type="GO" id="GO:0035725">
    <property type="term" value="P:sodium ion transmembrane transport"/>
    <property type="evidence" value="ECO:0000250"/>
    <property type="project" value="UniProtKB"/>
</dbReference>
<dbReference type="FunFam" id="2.60.470.10:FF:000002">
    <property type="entry name" value="Amiloride-sensitive sodium channel subunit alpha"/>
    <property type="match status" value="1"/>
</dbReference>
<dbReference type="FunFam" id="1.10.287.770:FF:000002">
    <property type="entry name" value="Amiloride-sensitive sodium channel subunit beta 1"/>
    <property type="match status" value="1"/>
</dbReference>
<dbReference type="Gene3D" id="2.60.470.10">
    <property type="entry name" value="Acid-sensing ion channels like domains"/>
    <property type="match status" value="1"/>
</dbReference>
<dbReference type="Gene3D" id="1.10.287.770">
    <property type="entry name" value="YojJ-like"/>
    <property type="match status" value="1"/>
</dbReference>
<dbReference type="InterPro" id="IPR001873">
    <property type="entry name" value="ENaC"/>
</dbReference>
<dbReference type="InterPro" id="IPR004724">
    <property type="entry name" value="ENaC_chordates"/>
</dbReference>
<dbReference type="InterPro" id="IPR020903">
    <property type="entry name" value="ENaC_CS"/>
</dbReference>
<dbReference type="NCBIfam" id="TIGR00859">
    <property type="entry name" value="ENaC"/>
    <property type="match status" value="1"/>
</dbReference>
<dbReference type="PANTHER" id="PTHR11690:SF124">
    <property type="entry name" value="AMILORIDE-SENSITIVE SODIUM CHANNEL SUBUNIT ALPHA"/>
    <property type="match status" value="1"/>
</dbReference>
<dbReference type="PANTHER" id="PTHR11690">
    <property type="entry name" value="AMILORIDE-SENSITIVE SODIUM CHANNEL-RELATED"/>
    <property type="match status" value="1"/>
</dbReference>
<dbReference type="Pfam" id="PF00858">
    <property type="entry name" value="ASC"/>
    <property type="match status" value="1"/>
</dbReference>
<dbReference type="PRINTS" id="PR01078">
    <property type="entry name" value="AMINACHANNEL"/>
</dbReference>
<dbReference type="PROSITE" id="PS01206">
    <property type="entry name" value="ASC"/>
    <property type="match status" value="1"/>
</dbReference>
<name>SCNNA_CAVPO</name>
<accession>Q9R1N2</accession>
<accession>Q9QXF9</accession>
<comment type="function">
    <text evidence="1">This is one of the three pore-forming subunits of the heterotrimeric epithelial sodium channel (ENaC), a critical regulator of sodium balance and fluid homeostasis. ENaC operates in epithelial tissues, where it mediates the electrodiffusion of sodium ions from extracellular fluid through the apical membrane of cells, with water following osmotically. It plays a key role in maintaining sodium homeostasis through electrogenic sodium reabsorption in the kidneys. Additionally, ENaC is essential for airway surface liquid homeostasis, which is crucial for proper mucus clearance.</text>
</comment>
<comment type="catalytic activity">
    <reaction evidence="1">
        <text>Na(+)(in) = Na(+)(out)</text>
        <dbReference type="Rhea" id="RHEA:34963"/>
        <dbReference type="ChEBI" id="CHEBI:29101"/>
    </reaction>
</comment>
<comment type="activity regulation">
    <text evidence="1">Originally identified and characterized by its inhibition by the diuretic drug amiloride.</text>
</comment>
<comment type="subunit">
    <text evidence="1">Heterotrimer; containing an alpha/SCNN1A, a beta/SCNN1B and a gamma/SCNN1G subunit. Interacts with WWP1 (via WW domains). Interacts with WWP2 (via WW domains); inhibits the channel. Interacts with BPIFA1; the interaction is indirect via SCNN1B and inhibits the proteolytic processing of SCNN1A and SCNN1G and the activation of ENaC (By similarity). Interacts with the full-length immature form of PCSK9 (pro-PCSK9).</text>
</comment>
<comment type="subcellular location">
    <subcellularLocation>
        <location evidence="2">Apical cell membrane</location>
        <topology evidence="2">Multi-pass membrane protein</topology>
    </subcellularLocation>
    <subcellularLocation>
        <location evidence="1">Cell projection</location>
        <location evidence="1">Cilium</location>
    </subcellularLocation>
    <subcellularLocation>
        <location evidence="1">Cytoplasmic granule</location>
    </subcellularLocation>
    <subcellularLocation>
        <location evidence="1">Cytoplasm</location>
    </subcellularLocation>
    <subcellularLocation>
        <location evidence="2">Cytoplasmic vesicle</location>
        <location evidence="2">Secretory vesicle</location>
        <location evidence="2">Acrosome</location>
    </subcellularLocation>
    <subcellularLocation>
        <location evidence="2">Cell projection</location>
        <location evidence="2">Cilium</location>
        <location evidence="2">Flagellum</location>
    </subcellularLocation>
    <text evidence="1 2">In the oviduct and bronchus, located on cilia in multi-ciliated cells. In endometrial non-ciliated epithelial cells, restricted to apical surfaces. In epidermis, located nearly uniformly in the cytoplasm in a granular distribution. In sebaceous glands, observed only in the cytoplasmic space in between the lipid vesicles. In eccrine sweat glands, mainly located at the apical surface of the cells facing the lumen. In skin, in arrector pili muscle cells and in adipocytes, located in the cytoplasm and colocalized with actin fibers.</text>
</comment>
<comment type="developmental stage">
    <text evidence="6">Expression in fetus is maximal at term and declines postnatally.</text>
</comment>
<comment type="PTM">
    <text evidence="1">Ubiquitinated. Can be ubiquitinated at multiple sites and undergo monoubiquitination and polyubiquitination. Ubiquitination by NEDD4 or NEDD4L inhibits the ENaC channel through endocytosis, intracellular retention and degradation of its individual subunits.</text>
</comment>
<comment type="PTM">
    <text evidence="2">N-glycosylated.</text>
</comment>
<comment type="PTM">
    <text evidence="1 3">ENaC is activated through the proteolytic maturation of its subunits. Furin cleaves the SCNN1A subunit, which results in a stepwise increase in the open probability of the channel due to the release of an inhibitory tract (By similarity). BPIFA1, which is recruited by the SCNN1B subunit, prevents the proteolytic activation of ENaC (By similarity).</text>
</comment>
<comment type="similarity">
    <text evidence="8">Belongs to the amiloride-sensitive sodium channel (TC 1.A.6) family. SCNN1A subfamily.</text>
</comment>
<protein>
    <recommendedName>
        <fullName evidence="9">Epithelial sodium channel subunit alpha</fullName>
        <shortName>Alpha-ENaC</shortName>
        <shortName>Epithelial Na(+) channel subunit alpha</shortName>
    </recommendedName>
    <alternativeName>
        <fullName>Alpha-NaCH</fullName>
    </alternativeName>
    <alternativeName>
        <fullName evidence="9">Amiloride-sensitive sodium channel subunit alpha</fullName>
    </alternativeName>
    <alternativeName>
        <fullName>Nonvoltage-gated sodium channel 1 subunit alpha</fullName>
    </alternativeName>
    <alternativeName>
        <fullName>SCNEA</fullName>
    </alternativeName>
</protein>
<organism>
    <name type="scientific">Cavia porcellus</name>
    <name type="common">Guinea pig</name>
    <dbReference type="NCBI Taxonomy" id="10141"/>
    <lineage>
        <taxon>Eukaryota</taxon>
        <taxon>Metazoa</taxon>
        <taxon>Chordata</taxon>
        <taxon>Craniata</taxon>
        <taxon>Vertebrata</taxon>
        <taxon>Euteleostomi</taxon>
        <taxon>Mammalia</taxon>
        <taxon>Eutheria</taxon>
        <taxon>Euarchontoglires</taxon>
        <taxon>Glires</taxon>
        <taxon>Rodentia</taxon>
        <taxon>Hystricomorpha</taxon>
        <taxon>Caviidae</taxon>
        <taxon>Cavia</taxon>
    </lineage>
</organism>
<evidence type="ECO:0000250" key="1">
    <source>
        <dbReference type="UniProtKB" id="P37088"/>
    </source>
</evidence>
<evidence type="ECO:0000250" key="2">
    <source>
        <dbReference type="UniProtKB" id="P37089"/>
    </source>
</evidence>
<evidence type="ECO:0000250" key="3">
    <source>
        <dbReference type="UniProtKB" id="Q61180"/>
    </source>
</evidence>
<evidence type="ECO:0000255" key="4"/>
<evidence type="ECO:0000256" key="5">
    <source>
        <dbReference type="SAM" id="MobiDB-lite"/>
    </source>
</evidence>
<evidence type="ECO:0000269" key="6">
    <source>
    </source>
</evidence>
<evidence type="ECO:0000303" key="7">
    <source ref="1"/>
</evidence>
<evidence type="ECO:0000305" key="8"/>
<evidence type="ECO:0000305" key="9">
    <source ref="1"/>
</evidence>
<feature type="chain" id="PRO_0000181260" description="Epithelial sodium channel subunit alpha">
    <location>
        <begin position="1"/>
        <end position="682"/>
    </location>
</feature>
<feature type="topological domain" description="Cytoplasmic" evidence="2">
    <location>
        <begin position="1"/>
        <end position="111"/>
    </location>
</feature>
<feature type="transmembrane region" description="Helical; Name=1" evidence="4">
    <location>
        <begin position="112"/>
        <end position="132"/>
    </location>
</feature>
<feature type="topological domain" description="Extracellular" evidence="2">
    <location>
        <begin position="133"/>
        <end position="586"/>
    </location>
</feature>
<feature type="transmembrane region" description="Helical; Name=2" evidence="4">
    <location>
        <begin position="587"/>
        <end position="607"/>
    </location>
</feature>
<feature type="topological domain" description="Cytoplasmic" evidence="2">
    <location>
        <begin position="608"/>
        <end position="682"/>
    </location>
</feature>
<feature type="region of interest" description="Disordered" evidence="5">
    <location>
        <begin position="34"/>
        <end position="69"/>
    </location>
</feature>
<feature type="region of interest" description="Gating release of inhibition by proteolysis (GRIP); protease-sensitive region that is responsible for the proteolytic activation of the channel" evidence="1">
    <location>
        <begin position="201"/>
        <end position="267"/>
    </location>
</feature>
<feature type="region of interest" description="Disordered" evidence="5">
    <location>
        <begin position="221"/>
        <end position="240"/>
    </location>
</feature>
<feature type="short sequence motif" description="PY motif; recruits WW domain-containing proteins and is thereby required for ubiquitination and inhibition of the channel by NEDD4 and NEDD4L" evidence="1">
    <location>
        <begin position="653"/>
        <end position="657"/>
    </location>
</feature>
<feature type="site" description="Cleavage by Furin" evidence="3">
    <location>
        <begin position="204"/>
        <end position="205"/>
    </location>
</feature>
<feature type="glycosylation site" description="N-linked (GlcNAc...) asparagine" evidence="4">
    <location>
        <position position="191"/>
    </location>
</feature>
<feature type="glycosylation site" description="N-linked (GlcNAc...) asparagine" evidence="4">
    <location>
        <position position="504"/>
    </location>
</feature>
<feature type="disulfide bond" evidence="1">
    <location>
        <begin position="159"/>
        <end position="329"/>
    </location>
</feature>
<feature type="disulfide bond" evidence="1">
    <location>
        <begin position="253"/>
        <end position="260"/>
    </location>
</feature>
<feature type="disulfide bond" evidence="1">
    <location>
        <begin position="306"/>
        <end position="313"/>
    </location>
</feature>
<feature type="disulfide bond" evidence="1">
    <location>
        <begin position="418"/>
        <end position="503"/>
    </location>
</feature>
<feature type="disulfide bond" evidence="1">
    <location>
        <begin position="440"/>
        <end position="499"/>
    </location>
</feature>
<feature type="disulfide bond" evidence="1">
    <location>
        <begin position="440"/>
        <end position="480"/>
    </location>
</feature>
<feature type="disulfide bond" evidence="1">
    <location>
        <begin position="444"/>
        <end position="495"/>
    </location>
</feature>
<feature type="disulfide bond" evidence="1">
    <location>
        <begin position="453"/>
        <end position="503"/>
    </location>
</feature>
<feature type="disulfide bond" evidence="1">
    <location>
        <begin position="453"/>
        <end position="480"/>
    </location>
</feature>
<feature type="disulfide bond" evidence="1">
    <location>
        <begin position="455"/>
        <end position="469"/>
    </location>
</feature>
<feature type="sequence conflict" description="In Ref. 2; CAB64910." evidence="8" ref="2">
    <original>A</original>
    <variation>E</variation>
    <location>
        <position position="34"/>
    </location>
</feature>
<feature type="sequence conflict" description="In Ref. 2; CAB64910." evidence="8" ref="2">
    <original>I</original>
    <variation>T</variation>
    <location>
        <position position="75"/>
    </location>
</feature>
<feature type="sequence conflict" description="In Ref. 2; CAB64910." evidence="8" ref="2">
    <original>RW</original>
    <variation>SL</variation>
    <location>
        <begin position="293"/>
        <end position="294"/>
    </location>
</feature>
<feature type="sequence conflict" description="In Ref. 2; CAB64910." evidence="8" ref="2">
    <original>T</original>
    <variation>A</variation>
    <location>
        <position position="298"/>
    </location>
</feature>
<feature type="sequence conflict" description="In Ref. 2; CAB64910." evidence="8" ref="2">
    <original>E</original>
    <variation>Q</variation>
    <location>
        <position position="467"/>
    </location>
</feature>
<feature type="sequence conflict" description="In Ref. 2; CAB64910." evidence="8" ref="2">
    <original>TNH</original>
    <variation>RKQ</variation>
    <location>
        <begin position="472"/>
        <end position="474"/>
    </location>
</feature>
<feature type="sequence conflict" description="In Ref. 2; CAB64910." evidence="8" ref="2">
    <original>AA</original>
    <variation>VT</variation>
    <location>
        <begin position="520"/>
        <end position="521"/>
    </location>
</feature>
<feature type="sequence conflict" description="In Ref. 2; CAB64910." evidence="8" ref="2">
    <original>K</original>
    <variation>N</variation>
    <location>
        <position position="547"/>
    </location>
</feature>
<feature type="sequence conflict" description="In Ref. 2; CAB64910." evidence="8" ref="2">
    <original>T</original>
    <variation>S</variation>
    <location>
        <position position="570"/>
    </location>
</feature>
<gene>
    <name evidence="1" type="primary">SCNN1A</name>
    <name evidence="7" type="synonym">ENAC</name>
</gene>
<reference key="1">
    <citation type="submission" date="1998-06" db="EMBL/GenBank/DDBJ databases">
        <title>Domestic guinea pig lung alpha subunit of epithelial amiloride-sensitive sodium channel (ENaC) mRNA.</title>
        <authorList>
            <person name="Baines D.L."/>
            <person name="Bingle C.D."/>
            <person name="Vijayaragavan K."/>
            <person name="Olver R.E."/>
        </authorList>
    </citation>
    <scope>NUCLEOTIDE SEQUENCE [MRNA]</scope>
    <source>
        <tissue>Lung</tissue>
    </source>
</reference>
<reference key="2">
    <citation type="journal article" date="2000" name="Pflugers Arch.">
        <title>cAMP sensitivity conferred to the epithelial Na+ channel by alpha-subunit cloned from guinea-pig colon.</title>
        <authorList>
            <person name="Schnizler M."/>
            <person name="Mastroberardino L."/>
            <person name="Reifarth F."/>
            <person name="Weber W.-M."/>
            <person name="Verrey F."/>
            <person name="Clauss W."/>
        </authorList>
    </citation>
    <scope>NUCLEOTIDE SEQUENCE [MRNA] OF 27-682</scope>
    <source>
        <tissue>Colon mucosa</tissue>
    </source>
</reference>
<reference key="3">
    <citation type="journal article" date="2000" name="J. Physiol. (Lond.)">
        <title>The influence of mode of delivery, hormonal status and postnatal O2 environment on epithelial sodium channel (ENaC) expression in perinatal guinea-pig lung.</title>
        <authorList>
            <person name="Baines D.L."/>
            <person name="Folkesson H.G."/>
            <person name="Norlin A."/>
            <person name="Bingle C.D."/>
            <person name="Yuan H.T."/>
            <person name="Olver R.E."/>
        </authorList>
    </citation>
    <scope>DEVELOPMENTAL STAGE</scope>
    <source>
        <tissue>Lung</tissue>
    </source>
</reference>
<keyword id="KW-1003">Cell membrane</keyword>
<keyword id="KW-0966">Cell projection</keyword>
<keyword id="KW-0969">Cilium</keyword>
<keyword id="KW-0963">Cytoplasm</keyword>
<keyword id="KW-0968">Cytoplasmic vesicle</keyword>
<keyword id="KW-1015">Disulfide bond</keyword>
<keyword id="KW-0282">Flagellum</keyword>
<keyword id="KW-0325">Glycoprotein</keyword>
<keyword id="KW-0407">Ion channel</keyword>
<keyword id="KW-0406">Ion transport</keyword>
<keyword id="KW-0472">Membrane</keyword>
<keyword id="KW-1185">Reference proteome</keyword>
<keyword id="KW-0915">Sodium</keyword>
<keyword id="KW-0894">Sodium channel</keyword>
<keyword id="KW-0739">Sodium transport</keyword>
<keyword id="KW-0812">Transmembrane</keyword>
<keyword id="KW-1133">Transmembrane helix</keyword>
<keyword id="KW-0813">Transport</keyword>
<keyword id="KW-0832">Ubl conjugation</keyword>